<sequence length="704" mass="77639">MARTTPIARYRNIGISAHIDAGKTTTTERILFYTGVNHKIGEVHDGAATMDWMEQEQERGITITSAATTAFWSGMAKQYEPHRINIIDTPGHVDFTIEVERSMRVLDGAVMVYCAVGGVQPQSETVWRQANKYKVPRIAFVNKMDRMGANFLKVVNQIKTRLGANPVPLQLAIGAEEHFTGVVDLVKMKAINWNDADQGVTFEYEDIPADMVELANEWHQNLIESAAEASEELMEKYLGGEELTEEEIKGALRQRVLNNEIILVTCGSAFKNKGVQAMLDAVIDYLPSPVDVPAINGILDDGKDTPAERHASDDEPFSALAFKIATDPFVGNLTFFRVYSGVVNSGDTVLNSVKAARERFGRIVQMHANKREEIKEVRAGDIAAAIGLKDVTTGDTLCDPDAPIILERMEFPEPVISIAVEPKTKADQEKMGLALGRLAKEDPSFRVWTDEESNQTIIAGMGELHLDIIVDRMKREFNVEANVGKPQVAYRETIRQKVTDVEGKHAKQSGGRGQYGHVVIDMYPLEPGSNPKGYEFINDIKGGVIPGEYIPAVDKGIQEQLKAGPLAGYPVVDMGIRLHFGSYHDVDSSELAFKLAASIAFKEGFKKAKPVLLEPIMKVEVETPEENTGDVIGDLSRRRGMLKGQESEVTGVKIHAEVPLSEMFGYATQLRSLTKGRASYTMEFLKYDEAPSNVAQAVIEARGK</sequence>
<proteinExistence type="inferred from homology"/>
<reference key="1">
    <citation type="journal article" date="2009" name="PLoS Genet.">
        <title>Organised genome dynamics in the Escherichia coli species results in highly diverse adaptive paths.</title>
        <authorList>
            <person name="Touchon M."/>
            <person name="Hoede C."/>
            <person name="Tenaillon O."/>
            <person name="Barbe V."/>
            <person name="Baeriswyl S."/>
            <person name="Bidet P."/>
            <person name="Bingen E."/>
            <person name="Bonacorsi S."/>
            <person name="Bouchier C."/>
            <person name="Bouvet O."/>
            <person name="Calteau A."/>
            <person name="Chiapello H."/>
            <person name="Clermont O."/>
            <person name="Cruveiller S."/>
            <person name="Danchin A."/>
            <person name="Diard M."/>
            <person name="Dossat C."/>
            <person name="Karoui M.E."/>
            <person name="Frapy E."/>
            <person name="Garry L."/>
            <person name="Ghigo J.M."/>
            <person name="Gilles A.M."/>
            <person name="Johnson J."/>
            <person name="Le Bouguenec C."/>
            <person name="Lescat M."/>
            <person name="Mangenot S."/>
            <person name="Martinez-Jehanne V."/>
            <person name="Matic I."/>
            <person name="Nassif X."/>
            <person name="Oztas S."/>
            <person name="Petit M.A."/>
            <person name="Pichon C."/>
            <person name="Rouy Z."/>
            <person name="Ruf C.S."/>
            <person name="Schneider D."/>
            <person name="Tourret J."/>
            <person name="Vacherie B."/>
            <person name="Vallenet D."/>
            <person name="Medigue C."/>
            <person name="Rocha E.P.C."/>
            <person name="Denamur E."/>
        </authorList>
    </citation>
    <scope>NUCLEOTIDE SEQUENCE [LARGE SCALE GENOMIC DNA]</scope>
    <source>
        <strain>UMN026 / ExPEC</strain>
    </source>
</reference>
<feature type="chain" id="PRO_1000201460" description="Elongation factor G">
    <location>
        <begin position="1"/>
        <end position="704"/>
    </location>
</feature>
<feature type="domain" description="tr-type G">
    <location>
        <begin position="8"/>
        <end position="290"/>
    </location>
</feature>
<feature type="binding site" evidence="2">
    <location>
        <begin position="17"/>
        <end position="24"/>
    </location>
    <ligand>
        <name>GTP</name>
        <dbReference type="ChEBI" id="CHEBI:37565"/>
    </ligand>
</feature>
<feature type="binding site" evidence="2">
    <location>
        <begin position="88"/>
        <end position="92"/>
    </location>
    <ligand>
        <name>GTP</name>
        <dbReference type="ChEBI" id="CHEBI:37565"/>
    </ligand>
</feature>
<feature type="binding site" evidence="2">
    <location>
        <begin position="142"/>
        <end position="145"/>
    </location>
    <ligand>
        <name>GTP</name>
        <dbReference type="ChEBI" id="CHEBI:37565"/>
    </ligand>
</feature>
<feature type="modified residue" description="N6-acetyllysine" evidence="1">
    <location>
        <position position="504"/>
    </location>
</feature>
<feature type="modified residue" description="N6-acetyllysine" evidence="1">
    <location>
        <position position="643"/>
    </location>
</feature>
<dbReference type="EMBL" id="CU928163">
    <property type="protein sequence ID" value="CAR14948.1"/>
    <property type="molecule type" value="Genomic_DNA"/>
</dbReference>
<dbReference type="RefSeq" id="WP_000124703.1">
    <property type="nucleotide sequence ID" value="NC_011751.1"/>
</dbReference>
<dbReference type="RefSeq" id="YP_002414453.1">
    <property type="nucleotide sequence ID" value="NC_011751.1"/>
</dbReference>
<dbReference type="SMR" id="B7NDU8"/>
<dbReference type="STRING" id="585056.ECUMN_3800"/>
<dbReference type="KEGG" id="eum:ECUMN_3800"/>
<dbReference type="PATRIC" id="fig|585056.7.peg.3974"/>
<dbReference type="HOGENOM" id="CLU_002794_4_1_6"/>
<dbReference type="Proteomes" id="UP000007097">
    <property type="component" value="Chromosome"/>
</dbReference>
<dbReference type="GO" id="GO:0005737">
    <property type="term" value="C:cytoplasm"/>
    <property type="evidence" value="ECO:0007669"/>
    <property type="project" value="UniProtKB-SubCell"/>
</dbReference>
<dbReference type="GO" id="GO:0005525">
    <property type="term" value="F:GTP binding"/>
    <property type="evidence" value="ECO:0007669"/>
    <property type="project" value="UniProtKB-UniRule"/>
</dbReference>
<dbReference type="GO" id="GO:0003924">
    <property type="term" value="F:GTPase activity"/>
    <property type="evidence" value="ECO:0007669"/>
    <property type="project" value="InterPro"/>
</dbReference>
<dbReference type="GO" id="GO:0097216">
    <property type="term" value="F:guanosine tetraphosphate binding"/>
    <property type="evidence" value="ECO:0007669"/>
    <property type="project" value="UniProtKB-ARBA"/>
</dbReference>
<dbReference type="GO" id="GO:0003746">
    <property type="term" value="F:translation elongation factor activity"/>
    <property type="evidence" value="ECO:0007669"/>
    <property type="project" value="UniProtKB-UniRule"/>
</dbReference>
<dbReference type="GO" id="GO:0032790">
    <property type="term" value="P:ribosome disassembly"/>
    <property type="evidence" value="ECO:0007669"/>
    <property type="project" value="TreeGrafter"/>
</dbReference>
<dbReference type="CDD" id="cd01886">
    <property type="entry name" value="EF-G"/>
    <property type="match status" value="1"/>
</dbReference>
<dbReference type="CDD" id="cd16262">
    <property type="entry name" value="EFG_III"/>
    <property type="match status" value="1"/>
</dbReference>
<dbReference type="CDD" id="cd01434">
    <property type="entry name" value="EFG_mtEFG1_IV"/>
    <property type="match status" value="1"/>
</dbReference>
<dbReference type="CDD" id="cd03713">
    <property type="entry name" value="EFG_mtEFG_C"/>
    <property type="match status" value="1"/>
</dbReference>
<dbReference type="CDD" id="cd04088">
    <property type="entry name" value="EFG_mtEFG_II"/>
    <property type="match status" value="1"/>
</dbReference>
<dbReference type="FunFam" id="2.40.30.10:FF:000006">
    <property type="entry name" value="Elongation factor G"/>
    <property type="match status" value="1"/>
</dbReference>
<dbReference type="FunFam" id="3.30.230.10:FF:000003">
    <property type="entry name" value="Elongation factor G"/>
    <property type="match status" value="1"/>
</dbReference>
<dbReference type="FunFam" id="3.30.70.240:FF:000001">
    <property type="entry name" value="Elongation factor G"/>
    <property type="match status" value="1"/>
</dbReference>
<dbReference type="FunFam" id="3.30.70.870:FF:000001">
    <property type="entry name" value="Elongation factor G"/>
    <property type="match status" value="1"/>
</dbReference>
<dbReference type="FunFam" id="3.40.50.300:FF:000029">
    <property type="entry name" value="Elongation factor G"/>
    <property type="match status" value="1"/>
</dbReference>
<dbReference type="Gene3D" id="3.30.230.10">
    <property type="match status" value="1"/>
</dbReference>
<dbReference type="Gene3D" id="3.30.70.240">
    <property type="match status" value="1"/>
</dbReference>
<dbReference type="Gene3D" id="3.30.70.870">
    <property type="entry name" value="Elongation Factor G (Translational Gtpase), domain 3"/>
    <property type="match status" value="1"/>
</dbReference>
<dbReference type="Gene3D" id="3.40.50.300">
    <property type="entry name" value="P-loop containing nucleotide triphosphate hydrolases"/>
    <property type="match status" value="1"/>
</dbReference>
<dbReference type="Gene3D" id="2.40.30.10">
    <property type="entry name" value="Translation factors"/>
    <property type="match status" value="1"/>
</dbReference>
<dbReference type="HAMAP" id="MF_00054_B">
    <property type="entry name" value="EF_G_EF_2_B"/>
    <property type="match status" value="1"/>
</dbReference>
<dbReference type="InterPro" id="IPR041095">
    <property type="entry name" value="EFG_II"/>
</dbReference>
<dbReference type="InterPro" id="IPR009022">
    <property type="entry name" value="EFG_III"/>
</dbReference>
<dbReference type="InterPro" id="IPR035647">
    <property type="entry name" value="EFG_III/V"/>
</dbReference>
<dbReference type="InterPro" id="IPR047872">
    <property type="entry name" value="EFG_IV"/>
</dbReference>
<dbReference type="InterPro" id="IPR035649">
    <property type="entry name" value="EFG_V"/>
</dbReference>
<dbReference type="InterPro" id="IPR000640">
    <property type="entry name" value="EFG_V-like"/>
</dbReference>
<dbReference type="InterPro" id="IPR004161">
    <property type="entry name" value="EFTu-like_2"/>
</dbReference>
<dbReference type="InterPro" id="IPR031157">
    <property type="entry name" value="G_TR_CS"/>
</dbReference>
<dbReference type="InterPro" id="IPR027417">
    <property type="entry name" value="P-loop_NTPase"/>
</dbReference>
<dbReference type="InterPro" id="IPR020568">
    <property type="entry name" value="Ribosomal_Su5_D2-typ_SF"/>
</dbReference>
<dbReference type="InterPro" id="IPR014721">
    <property type="entry name" value="Ribsml_uS5_D2-typ_fold_subgr"/>
</dbReference>
<dbReference type="InterPro" id="IPR005225">
    <property type="entry name" value="Small_GTP-bd"/>
</dbReference>
<dbReference type="InterPro" id="IPR000795">
    <property type="entry name" value="T_Tr_GTP-bd_dom"/>
</dbReference>
<dbReference type="InterPro" id="IPR009000">
    <property type="entry name" value="Transl_B-barrel_sf"/>
</dbReference>
<dbReference type="InterPro" id="IPR004540">
    <property type="entry name" value="Transl_elong_EFG/EF2"/>
</dbReference>
<dbReference type="InterPro" id="IPR005517">
    <property type="entry name" value="Transl_elong_EFG/EF2_IV"/>
</dbReference>
<dbReference type="NCBIfam" id="TIGR00484">
    <property type="entry name" value="EF-G"/>
    <property type="match status" value="1"/>
</dbReference>
<dbReference type="NCBIfam" id="NF009381">
    <property type="entry name" value="PRK12740.1-5"/>
    <property type="match status" value="1"/>
</dbReference>
<dbReference type="NCBIfam" id="TIGR00231">
    <property type="entry name" value="small_GTP"/>
    <property type="match status" value="1"/>
</dbReference>
<dbReference type="PANTHER" id="PTHR43261:SF1">
    <property type="entry name" value="RIBOSOME-RELEASING FACTOR 2, MITOCHONDRIAL"/>
    <property type="match status" value="1"/>
</dbReference>
<dbReference type="PANTHER" id="PTHR43261">
    <property type="entry name" value="TRANSLATION ELONGATION FACTOR G-RELATED"/>
    <property type="match status" value="1"/>
</dbReference>
<dbReference type="Pfam" id="PF00679">
    <property type="entry name" value="EFG_C"/>
    <property type="match status" value="1"/>
</dbReference>
<dbReference type="Pfam" id="PF14492">
    <property type="entry name" value="EFG_III"/>
    <property type="match status" value="1"/>
</dbReference>
<dbReference type="Pfam" id="PF03764">
    <property type="entry name" value="EFG_IV"/>
    <property type="match status" value="1"/>
</dbReference>
<dbReference type="Pfam" id="PF00009">
    <property type="entry name" value="GTP_EFTU"/>
    <property type="match status" value="1"/>
</dbReference>
<dbReference type="Pfam" id="PF03144">
    <property type="entry name" value="GTP_EFTU_D2"/>
    <property type="match status" value="1"/>
</dbReference>
<dbReference type="PRINTS" id="PR00315">
    <property type="entry name" value="ELONGATNFCT"/>
</dbReference>
<dbReference type="SMART" id="SM00838">
    <property type="entry name" value="EFG_C"/>
    <property type="match status" value="1"/>
</dbReference>
<dbReference type="SMART" id="SM00889">
    <property type="entry name" value="EFG_IV"/>
    <property type="match status" value="1"/>
</dbReference>
<dbReference type="SUPFAM" id="SSF54980">
    <property type="entry name" value="EF-G C-terminal domain-like"/>
    <property type="match status" value="2"/>
</dbReference>
<dbReference type="SUPFAM" id="SSF52540">
    <property type="entry name" value="P-loop containing nucleoside triphosphate hydrolases"/>
    <property type="match status" value="1"/>
</dbReference>
<dbReference type="SUPFAM" id="SSF54211">
    <property type="entry name" value="Ribosomal protein S5 domain 2-like"/>
    <property type="match status" value="1"/>
</dbReference>
<dbReference type="SUPFAM" id="SSF50447">
    <property type="entry name" value="Translation proteins"/>
    <property type="match status" value="1"/>
</dbReference>
<dbReference type="PROSITE" id="PS00301">
    <property type="entry name" value="G_TR_1"/>
    <property type="match status" value="1"/>
</dbReference>
<dbReference type="PROSITE" id="PS51722">
    <property type="entry name" value="G_TR_2"/>
    <property type="match status" value="1"/>
</dbReference>
<keyword id="KW-0007">Acetylation</keyword>
<keyword id="KW-0963">Cytoplasm</keyword>
<keyword id="KW-0251">Elongation factor</keyword>
<keyword id="KW-0342">GTP-binding</keyword>
<keyword id="KW-0547">Nucleotide-binding</keyword>
<keyword id="KW-0648">Protein biosynthesis</keyword>
<protein>
    <recommendedName>
        <fullName evidence="2">Elongation factor G</fullName>
        <shortName evidence="2">EF-G</shortName>
    </recommendedName>
</protein>
<name>EFG_ECOLU</name>
<gene>
    <name evidence="2" type="primary">fusA</name>
    <name type="ordered locus">ECUMN_3800</name>
</gene>
<organism>
    <name type="scientific">Escherichia coli O17:K52:H18 (strain UMN026 / ExPEC)</name>
    <dbReference type="NCBI Taxonomy" id="585056"/>
    <lineage>
        <taxon>Bacteria</taxon>
        <taxon>Pseudomonadati</taxon>
        <taxon>Pseudomonadota</taxon>
        <taxon>Gammaproteobacteria</taxon>
        <taxon>Enterobacterales</taxon>
        <taxon>Enterobacteriaceae</taxon>
        <taxon>Escherichia</taxon>
    </lineage>
</organism>
<evidence type="ECO:0000250" key="1"/>
<evidence type="ECO:0000255" key="2">
    <source>
        <dbReference type="HAMAP-Rule" id="MF_00054"/>
    </source>
</evidence>
<comment type="function">
    <text evidence="2">Catalyzes the GTP-dependent ribosomal translocation step during translation elongation. During this step, the ribosome changes from the pre-translocational (PRE) to the post-translocational (POST) state as the newly formed A-site-bound peptidyl-tRNA and P-site-bound deacylated tRNA move to the P and E sites, respectively. Catalyzes the coordinated movement of the two tRNA molecules, the mRNA and conformational changes in the ribosome.</text>
</comment>
<comment type="subcellular location">
    <subcellularLocation>
        <location evidence="2">Cytoplasm</location>
    </subcellularLocation>
</comment>
<comment type="similarity">
    <text evidence="2">Belongs to the TRAFAC class translation factor GTPase superfamily. Classic translation factor GTPase family. EF-G/EF-2 subfamily.</text>
</comment>
<accession>B7NDU8</accession>